<proteinExistence type="inferred from homology"/>
<dbReference type="EC" id="6.1.1.10" evidence="1"/>
<dbReference type="EMBL" id="BX571965">
    <property type="protein sequence ID" value="CAH34994.1"/>
    <property type="molecule type" value="Genomic_DNA"/>
</dbReference>
<dbReference type="RefSeq" id="WP_004538477.1">
    <property type="nucleotide sequence ID" value="NZ_CP009538.1"/>
</dbReference>
<dbReference type="RefSeq" id="YP_107626.1">
    <property type="nucleotide sequence ID" value="NC_006350.1"/>
</dbReference>
<dbReference type="SMR" id="Q63W90"/>
<dbReference type="STRING" id="272560.BPSL0998"/>
<dbReference type="KEGG" id="bps:BPSL0998"/>
<dbReference type="PATRIC" id="fig|272560.51.peg.573"/>
<dbReference type="eggNOG" id="COG0073">
    <property type="taxonomic scope" value="Bacteria"/>
</dbReference>
<dbReference type="eggNOG" id="COG0143">
    <property type="taxonomic scope" value="Bacteria"/>
</dbReference>
<dbReference type="Proteomes" id="UP000000605">
    <property type="component" value="Chromosome 1"/>
</dbReference>
<dbReference type="GO" id="GO:0005829">
    <property type="term" value="C:cytosol"/>
    <property type="evidence" value="ECO:0007669"/>
    <property type="project" value="TreeGrafter"/>
</dbReference>
<dbReference type="GO" id="GO:0005524">
    <property type="term" value="F:ATP binding"/>
    <property type="evidence" value="ECO:0007669"/>
    <property type="project" value="UniProtKB-UniRule"/>
</dbReference>
<dbReference type="GO" id="GO:0046872">
    <property type="term" value="F:metal ion binding"/>
    <property type="evidence" value="ECO:0007669"/>
    <property type="project" value="UniProtKB-KW"/>
</dbReference>
<dbReference type="GO" id="GO:0004825">
    <property type="term" value="F:methionine-tRNA ligase activity"/>
    <property type="evidence" value="ECO:0007669"/>
    <property type="project" value="UniProtKB-UniRule"/>
</dbReference>
<dbReference type="GO" id="GO:0000049">
    <property type="term" value="F:tRNA binding"/>
    <property type="evidence" value="ECO:0007669"/>
    <property type="project" value="UniProtKB-KW"/>
</dbReference>
<dbReference type="GO" id="GO:0006431">
    <property type="term" value="P:methionyl-tRNA aminoacylation"/>
    <property type="evidence" value="ECO:0007669"/>
    <property type="project" value="UniProtKB-UniRule"/>
</dbReference>
<dbReference type="CDD" id="cd07957">
    <property type="entry name" value="Anticodon_Ia_Met"/>
    <property type="match status" value="1"/>
</dbReference>
<dbReference type="CDD" id="cd00814">
    <property type="entry name" value="MetRS_core"/>
    <property type="match status" value="1"/>
</dbReference>
<dbReference type="CDD" id="cd02800">
    <property type="entry name" value="tRNA_bind_EcMetRS_like"/>
    <property type="match status" value="1"/>
</dbReference>
<dbReference type="FunFam" id="2.20.28.20:FF:000001">
    <property type="entry name" value="Methionine--tRNA ligase"/>
    <property type="match status" value="1"/>
</dbReference>
<dbReference type="FunFam" id="2.40.50.140:FF:000042">
    <property type="entry name" value="Methionine--tRNA ligase"/>
    <property type="match status" value="1"/>
</dbReference>
<dbReference type="Gene3D" id="3.40.50.620">
    <property type="entry name" value="HUPs"/>
    <property type="match status" value="1"/>
</dbReference>
<dbReference type="Gene3D" id="1.10.730.10">
    <property type="entry name" value="Isoleucyl-tRNA Synthetase, Domain 1"/>
    <property type="match status" value="1"/>
</dbReference>
<dbReference type="Gene3D" id="2.20.28.20">
    <property type="entry name" value="Methionyl-tRNA synthetase, Zn-domain"/>
    <property type="match status" value="1"/>
</dbReference>
<dbReference type="Gene3D" id="2.40.50.140">
    <property type="entry name" value="Nucleic acid-binding proteins"/>
    <property type="match status" value="1"/>
</dbReference>
<dbReference type="HAMAP" id="MF_00098">
    <property type="entry name" value="Met_tRNA_synth_type1"/>
    <property type="match status" value="1"/>
</dbReference>
<dbReference type="InterPro" id="IPR001412">
    <property type="entry name" value="aa-tRNA-synth_I_CS"/>
</dbReference>
<dbReference type="InterPro" id="IPR041872">
    <property type="entry name" value="Anticodon_Met"/>
</dbReference>
<dbReference type="InterPro" id="IPR004495">
    <property type="entry name" value="Met-tRNA-synth_bsu_C"/>
</dbReference>
<dbReference type="InterPro" id="IPR023458">
    <property type="entry name" value="Met-tRNA_ligase_1"/>
</dbReference>
<dbReference type="InterPro" id="IPR014758">
    <property type="entry name" value="Met-tRNA_synth"/>
</dbReference>
<dbReference type="InterPro" id="IPR015413">
    <property type="entry name" value="Methionyl/Leucyl_tRNA_Synth"/>
</dbReference>
<dbReference type="InterPro" id="IPR033911">
    <property type="entry name" value="MetRS_core"/>
</dbReference>
<dbReference type="InterPro" id="IPR029038">
    <property type="entry name" value="MetRS_Zn"/>
</dbReference>
<dbReference type="InterPro" id="IPR012340">
    <property type="entry name" value="NA-bd_OB-fold"/>
</dbReference>
<dbReference type="InterPro" id="IPR014729">
    <property type="entry name" value="Rossmann-like_a/b/a_fold"/>
</dbReference>
<dbReference type="InterPro" id="IPR002547">
    <property type="entry name" value="tRNA-bd_dom"/>
</dbReference>
<dbReference type="InterPro" id="IPR009080">
    <property type="entry name" value="tRNAsynth_Ia_anticodon-bd"/>
</dbReference>
<dbReference type="NCBIfam" id="TIGR00398">
    <property type="entry name" value="metG"/>
    <property type="match status" value="1"/>
</dbReference>
<dbReference type="NCBIfam" id="TIGR00399">
    <property type="entry name" value="metG_C_term"/>
    <property type="match status" value="1"/>
</dbReference>
<dbReference type="NCBIfam" id="NF001100">
    <property type="entry name" value="PRK00133.1"/>
    <property type="match status" value="1"/>
</dbReference>
<dbReference type="PANTHER" id="PTHR45765">
    <property type="entry name" value="METHIONINE--TRNA LIGASE"/>
    <property type="match status" value="1"/>
</dbReference>
<dbReference type="PANTHER" id="PTHR45765:SF1">
    <property type="entry name" value="METHIONINE--TRNA LIGASE, CYTOPLASMIC"/>
    <property type="match status" value="1"/>
</dbReference>
<dbReference type="Pfam" id="PF09334">
    <property type="entry name" value="tRNA-synt_1g"/>
    <property type="match status" value="1"/>
</dbReference>
<dbReference type="Pfam" id="PF01588">
    <property type="entry name" value="tRNA_bind"/>
    <property type="match status" value="1"/>
</dbReference>
<dbReference type="PRINTS" id="PR01041">
    <property type="entry name" value="TRNASYNTHMET"/>
</dbReference>
<dbReference type="SUPFAM" id="SSF47323">
    <property type="entry name" value="Anticodon-binding domain of a subclass of class I aminoacyl-tRNA synthetases"/>
    <property type="match status" value="1"/>
</dbReference>
<dbReference type="SUPFAM" id="SSF57770">
    <property type="entry name" value="Methionyl-tRNA synthetase (MetRS), Zn-domain"/>
    <property type="match status" value="1"/>
</dbReference>
<dbReference type="SUPFAM" id="SSF50249">
    <property type="entry name" value="Nucleic acid-binding proteins"/>
    <property type="match status" value="1"/>
</dbReference>
<dbReference type="SUPFAM" id="SSF52374">
    <property type="entry name" value="Nucleotidylyl transferase"/>
    <property type="match status" value="1"/>
</dbReference>
<dbReference type="PROSITE" id="PS00178">
    <property type="entry name" value="AA_TRNA_LIGASE_I"/>
    <property type="match status" value="1"/>
</dbReference>
<dbReference type="PROSITE" id="PS50886">
    <property type="entry name" value="TRBD"/>
    <property type="match status" value="1"/>
</dbReference>
<sequence>MSASDLTSVQAGAPQGRRQILVTSALPYANGQIHIGHLVEYIQTDIWVRTMRMHGHEIYYIGADDTHGTPVMLRAEQEGVSPKQLIERVWREHKRDFDSFGVSFDNFYTTDSDENRVLSETIYLALKEAGFIAEREIEQAYDPVRQMFLPDRFIKGECPKCHAKDQYGDSCEVCGTTYQPTDLIHPYSVVSGAAPVRKTSTHYFFRLSDPRCEAFLREWVSGLAQPEATNKMREWLGEAGEAKLADWDISRDAPYFGFEIPGAPGKYFYVWLDAPVGYYASFKNLCQRRGLDFDAWIRKDSTTEQYHFIGKDILYFHTLFWPAMLEFSGHRTPTNVFAHGFLTVDGAKMSKSRGTFITAQSYIDTGLNPEWLRYYFAAKLNATMEDIDLNLEDFQARVNSDLVGKYVNIASRAAGFLLKRFDGRVQASAMNHPLLATLRGAIPQIAAHYEAREYGRALRQTMELADAVNGYVDSAKPWELAKDPANAVALHETCSVSLEAFRLLSLALKPVLPRVAQGVEAFLGIAPLTWADAGMPLSPEQPVRAYQHLMTRVDPKQIDALLAANRGSLQGTAAAAEAGAANGNGAGSKNGKGAKAAAQPAASAANADDGASPIISIDDFAKIDLRIAKIVACQAVEGSDKLLQLTLDVGEERTRNVFSGIKSAYRPEQLVGKLTVMVANLAPRKMKFGLSEGMVLAASAADEKAEPGLYILEPHSGAKPGMRVK</sequence>
<name>SYM_BURPS</name>
<comment type="function">
    <text evidence="1">Is required not only for elongation of protein synthesis but also for the initiation of all mRNA translation through initiator tRNA(fMet) aminoacylation.</text>
</comment>
<comment type="catalytic activity">
    <reaction evidence="1">
        <text>tRNA(Met) + L-methionine + ATP = L-methionyl-tRNA(Met) + AMP + diphosphate</text>
        <dbReference type="Rhea" id="RHEA:13481"/>
        <dbReference type="Rhea" id="RHEA-COMP:9667"/>
        <dbReference type="Rhea" id="RHEA-COMP:9698"/>
        <dbReference type="ChEBI" id="CHEBI:30616"/>
        <dbReference type="ChEBI" id="CHEBI:33019"/>
        <dbReference type="ChEBI" id="CHEBI:57844"/>
        <dbReference type="ChEBI" id="CHEBI:78442"/>
        <dbReference type="ChEBI" id="CHEBI:78530"/>
        <dbReference type="ChEBI" id="CHEBI:456215"/>
        <dbReference type="EC" id="6.1.1.10"/>
    </reaction>
</comment>
<comment type="cofactor">
    <cofactor evidence="1">
        <name>Zn(2+)</name>
        <dbReference type="ChEBI" id="CHEBI:29105"/>
    </cofactor>
    <text evidence="1">Binds 1 zinc ion per subunit.</text>
</comment>
<comment type="subunit">
    <text evidence="1">Homodimer.</text>
</comment>
<comment type="subcellular location">
    <subcellularLocation>
        <location evidence="1">Cytoplasm</location>
    </subcellularLocation>
</comment>
<comment type="similarity">
    <text evidence="1">Belongs to the class-I aminoacyl-tRNA synthetase family. MetG type 1 subfamily.</text>
</comment>
<organism>
    <name type="scientific">Burkholderia pseudomallei (strain K96243)</name>
    <dbReference type="NCBI Taxonomy" id="272560"/>
    <lineage>
        <taxon>Bacteria</taxon>
        <taxon>Pseudomonadati</taxon>
        <taxon>Pseudomonadota</taxon>
        <taxon>Betaproteobacteria</taxon>
        <taxon>Burkholderiales</taxon>
        <taxon>Burkholderiaceae</taxon>
        <taxon>Burkholderia</taxon>
        <taxon>pseudomallei group</taxon>
    </lineage>
</organism>
<reference key="1">
    <citation type="journal article" date="2004" name="Proc. Natl. Acad. Sci. U.S.A.">
        <title>Genomic plasticity of the causative agent of melioidosis, Burkholderia pseudomallei.</title>
        <authorList>
            <person name="Holden M.T.G."/>
            <person name="Titball R.W."/>
            <person name="Peacock S.J."/>
            <person name="Cerdeno-Tarraga A.-M."/>
            <person name="Atkins T."/>
            <person name="Crossman L.C."/>
            <person name="Pitt T."/>
            <person name="Churcher C."/>
            <person name="Mungall K.L."/>
            <person name="Bentley S.D."/>
            <person name="Sebaihia M."/>
            <person name="Thomson N.R."/>
            <person name="Bason N."/>
            <person name="Beacham I.R."/>
            <person name="Brooks K."/>
            <person name="Brown K.A."/>
            <person name="Brown N.F."/>
            <person name="Challis G.L."/>
            <person name="Cherevach I."/>
            <person name="Chillingworth T."/>
            <person name="Cronin A."/>
            <person name="Crossett B."/>
            <person name="Davis P."/>
            <person name="DeShazer D."/>
            <person name="Feltwell T."/>
            <person name="Fraser A."/>
            <person name="Hance Z."/>
            <person name="Hauser H."/>
            <person name="Holroyd S."/>
            <person name="Jagels K."/>
            <person name="Keith K.E."/>
            <person name="Maddison M."/>
            <person name="Moule S."/>
            <person name="Price C."/>
            <person name="Quail M.A."/>
            <person name="Rabbinowitsch E."/>
            <person name="Rutherford K."/>
            <person name="Sanders M."/>
            <person name="Simmonds M."/>
            <person name="Songsivilai S."/>
            <person name="Stevens K."/>
            <person name="Tumapa S."/>
            <person name="Vesaratchavest M."/>
            <person name="Whitehead S."/>
            <person name="Yeats C."/>
            <person name="Barrell B.G."/>
            <person name="Oyston P.C.F."/>
            <person name="Parkhill J."/>
        </authorList>
    </citation>
    <scope>NUCLEOTIDE SEQUENCE [LARGE SCALE GENOMIC DNA]</scope>
    <source>
        <strain>K96243</strain>
    </source>
</reference>
<gene>
    <name evidence="1" type="primary">metG</name>
    <name type="ordered locus">BPSL0998</name>
</gene>
<evidence type="ECO:0000255" key="1">
    <source>
        <dbReference type="HAMAP-Rule" id="MF_00098"/>
    </source>
</evidence>
<keyword id="KW-0030">Aminoacyl-tRNA synthetase</keyword>
<keyword id="KW-0067">ATP-binding</keyword>
<keyword id="KW-0963">Cytoplasm</keyword>
<keyword id="KW-0436">Ligase</keyword>
<keyword id="KW-0479">Metal-binding</keyword>
<keyword id="KW-0547">Nucleotide-binding</keyword>
<keyword id="KW-0648">Protein biosynthesis</keyword>
<keyword id="KW-1185">Reference proteome</keyword>
<keyword id="KW-0694">RNA-binding</keyword>
<keyword id="KW-0820">tRNA-binding</keyword>
<keyword id="KW-0862">Zinc</keyword>
<accession>Q63W90</accession>
<protein>
    <recommendedName>
        <fullName evidence="1">Methionine--tRNA ligase</fullName>
        <ecNumber evidence="1">6.1.1.10</ecNumber>
    </recommendedName>
    <alternativeName>
        <fullName evidence="1">Methionyl-tRNA synthetase</fullName>
        <shortName evidence="1">MetRS</shortName>
    </alternativeName>
</protein>
<feature type="chain" id="PRO_0000139115" description="Methionine--tRNA ligase">
    <location>
        <begin position="1"/>
        <end position="725"/>
    </location>
</feature>
<feature type="domain" description="tRNA-binding" evidence="1">
    <location>
        <begin position="619"/>
        <end position="725"/>
    </location>
</feature>
<feature type="short sequence motif" description="'HIGH' region">
    <location>
        <begin position="27"/>
        <end position="37"/>
    </location>
</feature>
<feature type="short sequence motif" description="'KMSKS' region">
    <location>
        <begin position="348"/>
        <end position="352"/>
    </location>
</feature>
<feature type="binding site" evidence="1">
    <location>
        <position position="158"/>
    </location>
    <ligand>
        <name>Zn(2+)</name>
        <dbReference type="ChEBI" id="CHEBI:29105"/>
    </ligand>
</feature>
<feature type="binding site" evidence="1">
    <location>
        <position position="161"/>
    </location>
    <ligand>
        <name>Zn(2+)</name>
        <dbReference type="ChEBI" id="CHEBI:29105"/>
    </ligand>
</feature>
<feature type="binding site" evidence="1">
    <location>
        <position position="171"/>
    </location>
    <ligand>
        <name>Zn(2+)</name>
        <dbReference type="ChEBI" id="CHEBI:29105"/>
    </ligand>
</feature>
<feature type="binding site" evidence="1">
    <location>
        <position position="174"/>
    </location>
    <ligand>
        <name>Zn(2+)</name>
        <dbReference type="ChEBI" id="CHEBI:29105"/>
    </ligand>
</feature>
<feature type="binding site" evidence="1">
    <location>
        <position position="351"/>
    </location>
    <ligand>
        <name>ATP</name>
        <dbReference type="ChEBI" id="CHEBI:30616"/>
    </ligand>
</feature>